<protein>
    <recommendedName>
        <fullName evidence="1">Adenosylcobinamide-GDP ribazoletransferase</fullName>
        <ecNumber evidence="1">2.7.8.26</ecNumber>
    </recommendedName>
    <alternativeName>
        <fullName evidence="1">Cobalamin synthase</fullName>
    </alternativeName>
    <alternativeName>
        <fullName evidence="1">Cobalamin-5'-phosphate synthase</fullName>
    </alternativeName>
</protein>
<organism>
    <name type="scientific">Thermosipho melanesiensis (strain DSM 12029 / CIP 104789 / BI429)</name>
    <dbReference type="NCBI Taxonomy" id="391009"/>
    <lineage>
        <taxon>Bacteria</taxon>
        <taxon>Thermotogati</taxon>
        <taxon>Thermotogota</taxon>
        <taxon>Thermotogae</taxon>
        <taxon>Thermotogales</taxon>
        <taxon>Fervidobacteriaceae</taxon>
        <taxon>Thermosipho</taxon>
    </lineage>
</organism>
<keyword id="KW-0997">Cell inner membrane</keyword>
<keyword id="KW-1003">Cell membrane</keyword>
<keyword id="KW-0169">Cobalamin biosynthesis</keyword>
<keyword id="KW-0460">Magnesium</keyword>
<keyword id="KW-0472">Membrane</keyword>
<keyword id="KW-0808">Transferase</keyword>
<keyword id="KW-0812">Transmembrane</keyword>
<keyword id="KW-1133">Transmembrane helix</keyword>
<feature type="chain" id="PRO_1000132608" description="Adenosylcobinamide-GDP ribazoletransferase">
    <location>
        <begin position="1"/>
        <end position="232"/>
    </location>
</feature>
<feature type="transmembrane region" description="Helical" evidence="1">
    <location>
        <begin position="32"/>
        <end position="52"/>
    </location>
</feature>
<feature type="transmembrane region" description="Helical" evidence="1">
    <location>
        <begin position="54"/>
        <end position="74"/>
    </location>
</feature>
<feature type="transmembrane region" description="Helical" evidence="1">
    <location>
        <begin position="102"/>
        <end position="122"/>
    </location>
</feature>
<feature type="transmembrane region" description="Helical" evidence="1">
    <location>
        <begin position="126"/>
        <end position="146"/>
    </location>
</feature>
<feature type="transmembrane region" description="Helical" evidence="1">
    <location>
        <begin position="172"/>
        <end position="192"/>
    </location>
</feature>
<feature type="transmembrane region" description="Helical" evidence="1">
    <location>
        <begin position="212"/>
        <end position="232"/>
    </location>
</feature>
<comment type="function">
    <text evidence="1">Joins adenosylcobinamide-GDP and alpha-ribazole to generate adenosylcobalamin (Ado-cobalamin). Also synthesizes adenosylcobalamin 5'-phosphate from adenosylcobinamide-GDP and alpha-ribazole 5'-phosphate.</text>
</comment>
<comment type="catalytic activity">
    <reaction evidence="1">
        <text>alpha-ribazole + adenosylcob(III)inamide-GDP = adenosylcob(III)alamin + GMP + H(+)</text>
        <dbReference type="Rhea" id="RHEA:16049"/>
        <dbReference type="ChEBI" id="CHEBI:10329"/>
        <dbReference type="ChEBI" id="CHEBI:15378"/>
        <dbReference type="ChEBI" id="CHEBI:18408"/>
        <dbReference type="ChEBI" id="CHEBI:58115"/>
        <dbReference type="ChEBI" id="CHEBI:60487"/>
        <dbReference type="EC" id="2.7.8.26"/>
    </reaction>
</comment>
<comment type="catalytic activity">
    <reaction evidence="1">
        <text>alpha-ribazole 5'-phosphate + adenosylcob(III)inamide-GDP = adenosylcob(III)alamin 5'-phosphate + GMP + H(+)</text>
        <dbReference type="Rhea" id="RHEA:23560"/>
        <dbReference type="ChEBI" id="CHEBI:15378"/>
        <dbReference type="ChEBI" id="CHEBI:57918"/>
        <dbReference type="ChEBI" id="CHEBI:58115"/>
        <dbReference type="ChEBI" id="CHEBI:60487"/>
        <dbReference type="ChEBI" id="CHEBI:60493"/>
        <dbReference type="EC" id="2.7.8.26"/>
    </reaction>
</comment>
<comment type="cofactor">
    <cofactor evidence="1">
        <name>Mg(2+)</name>
        <dbReference type="ChEBI" id="CHEBI:18420"/>
    </cofactor>
</comment>
<comment type="pathway">
    <text evidence="1">Cofactor biosynthesis; adenosylcobalamin biosynthesis; adenosylcobalamin from cob(II)yrinate a,c-diamide: step 7/7.</text>
</comment>
<comment type="subcellular location">
    <subcellularLocation>
        <location evidence="1">Cell inner membrane</location>
        <topology evidence="1">Multi-pass membrane protein</topology>
    </subcellularLocation>
</comment>
<comment type="similarity">
    <text evidence="1">Belongs to the CobS family.</text>
</comment>
<sequence>MIYDFLLSLGFISRIPINIKVKAFEVRVKRLPIYFPLVGYIPGILFFFGGSFENFLLKILFLILGYYFFDLFHFDGFLDTLDGFLNQSSKEKRLEIMSKGDVGPFAVFFGTLYVVVFWTLYLEIPPITFIYSSVFGRYSMNLLMFFSKPAKKTGLGALFFPFQKKNLLFSSFFLLPLLFSMKYFFISYVVTVVFSYLMSIVSNSKIGGVTGDVLGGACLMTNGLLLVVLGVV</sequence>
<proteinExistence type="inferred from homology"/>
<dbReference type="EC" id="2.7.8.26" evidence="1"/>
<dbReference type="EMBL" id="CP000716">
    <property type="protein sequence ID" value="ABR30718.1"/>
    <property type="molecule type" value="Genomic_DNA"/>
</dbReference>
<dbReference type="RefSeq" id="WP_012057079.1">
    <property type="nucleotide sequence ID" value="NC_009616.1"/>
</dbReference>
<dbReference type="STRING" id="391009.Tmel_0857"/>
<dbReference type="KEGG" id="tme:Tmel_0857"/>
<dbReference type="eggNOG" id="COG0368">
    <property type="taxonomic scope" value="Bacteria"/>
</dbReference>
<dbReference type="HOGENOM" id="CLU_057426_1_2_0"/>
<dbReference type="OrthoDB" id="9794626at2"/>
<dbReference type="UniPathway" id="UPA00148">
    <property type="reaction ID" value="UER00238"/>
</dbReference>
<dbReference type="Proteomes" id="UP000001110">
    <property type="component" value="Chromosome"/>
</dbReference>
<dbReference type="GO" id="GO:0005886">
    <property type="term" value="C:plasma membrane"/>
    <property type="evidence" value="ECO:0007669"/>
    <property type="project" value="UniProtKB-SubCell"/>
</dbReference>
<dbReference type="GO" id="GO:0051073">
    <property type="term" value="F:adenosylcobinamide-GDP ribazoletransferase activity"/>
    <property type="evidence" value="ECO:0007669"/>
    <property type="project" value="UniProtKB-UniRule"/>
</dbReference>
<dbReference type="GO" id="GO:0008818">
    <property type="term" value="F:cobalamin 5'-phosphate synthase activity"/>
    <property type="evidence" value="ECO:0007669"/>
    <property type="project" value="UniProtKB-UniRule"/>
</dbReference>
<dbReference type="GO" id="GO:0009236">
    <property type="term" value="P:cobalamin biosynthetic process"/>
    <property type="evidence" value="ECO:0007669"/>
    <property type="project" value="UniProtKB-UniRule"/>
</dbReference>
<dbReference type="HAMAP" id="MF_00719">
    <property type="entry name" value="CobS"/>
    <property type="match status" value="1"/>
</dbReference>
<dbReference type="InterPro" id="IPR003805">
    <property type="entry name" value="CobS"/>
</dbReference>
<dbReference type="PANTHER" id="PTHR34148">
    <property type="entry name" value="ADENOSYLCOBINAMIDE-GDP RIBAZOLETRANSFERASE"/>
    <property type="match status" value="1"/>
</dbReference>
<dbReference type="PANTHER" id="PTHR34148:SF1">
    <property type="entry name" value="ADENOSYLCOBINAMIDE-GDP RIBAZOLETRANSFERASE"/>
    <property type="match status" value="1"/>
</dbReference>
<dbReference type="Pfam" id="PF02654">
    <property type="entry name" value="CobS"/>
    <property type="match status" value="1"/>
</dbReference>
<gene>
    <name evidence="1" type="primary">cobS</name>
    <name type="ordered locus">Tmel_0857</name>
</gene>
<name>COBS_THEM4</name>
<reference key="1">
    <citation type="submission" date="2007-05" db="EMBL/GenBank/DDBJ databases">
        <title>Complete sequence of Thermosipho melanesiensis BI429.</title>
        <authorList>
            <consortium name="US DOE Joint Genome Institute"/>
            <person name="Copeland A."/>
            <person name="Lucas S."/>
            <person name="Lapidus A."/>
            <person name="Barry K."/>
            <person name="Glavina del Rio T."/>
            <person name="Dalin E."/>
            <person name="Tice H."/>
            <person name="Pitluck S."/>
            <person name="Chertkov O."/>
            <person name="Brettin T."/>
            <person name="Bruce D."/>
            <person name="Detter J.C."/>
            <person name="Han C."/>
            <person name="Schmutz J."/>
            <person name="Larimer F."/>
            <person name="Land M."/>
            <person name="Hauser L."/>
            <person name="Kyrpides N."/>
            <person name="Mikhailova N."/>
            <person name="Nelson K."/>
            <person name="Gogarten J.P."/>
            <person name="Noll K."/>
            <person name="Richardson P."/>
        </authorList>
    </citation>
    <scope>NUCLEOTIDE SEQUENCE [LARGE SCALE GENOMIC DNA]</scope>
    <source>
        <strain>DSM 12029 / CIP 104789 / BI429</strain>
    </source>
</reference>
<evidence type="ECO:0000255" key="1">
    <source>
        <dbReference type="HAMAP-Rule" id="MF_00719"/>
    </source>
</evidence>
<accession>A6LLB7</accession>